<reference key="1">
    <citation type="journal article" date="2006" name="Cytogenet. Genome Res.">
        <title>Isolation and functional analysis of human HMBOX1, a homeobox containing protein with transcriptional repressor activity.</title>
        <authorList>
            <person name="Chen S."/>
            <person name="Saiyin H."/>
            <person name="Zeng X."/>
            <person name="Xi J."/>
            <person name="Liu X."/>
            <person name="Li X."/>
            <person name="Yu L."/>
        </authorList>
    </citation>
    <scope>NUCLEOTIDE SEQUENCE [MRNA] (ISOFORM 1)</scope>
    <scope>SUBCELLULAR LOCATION</scope>
    <scope>TISSUE SPECIFICITY</scope>
    <source>
        <tissue>Pancreas</tissue>
    </source>
</reference>
<reference key="2">
    <citation type="journal article" date="2010" name="Mol. Biol. Rep.">
        <title>Characterization of a novel human HMBOX1 splicing variant lacking the homeodomain and with attenuated transcription repressor activity.</title>
        <authorList>
            <person name="Zhang M."/>
            <person name="Chen S."/>
            <person name="Li Q."/>
            <person name="Ling Y."/>
            <person name="Zhang J."/>
            <person name="Yu L."/>
        </authorList>
    </citation>
    <scope>NUCLEOTIDE SEQUENCE [MRNA] (ISOFORM 4)</scope>
    <scope>SUBCELLULAR LOCATION</scope>
    <scope>TISSUE SPECIFICITY</scope>
</reference>
<reference key="3">
    <citation type="journal article" date="2004" name="Nat. Genet.">
        <title>Complete sequencing and characterization of 21,243 full-length human cDNAs.</title>
        <authorList>
            <person name="Ota T."/>
            <person name="Suzuki Y."/>
            <person name="Nishikawa T."/>
            <person name="Otsuki T."/>
            <person name="Sugiyama T."/>
            <person name="Irie R."/>
            <person name="Wakamatsu A."/>
            <person name="Hayashi K."/>
            <person name="Sato H."/>
            <person name="Nagai K."/>
            <person name="Kimura K."/>
            <person name="Makita H."/>
            <person name="Sekine M."/>
            <person name="Obayashi M."/>
            <person name="Nishi T."/>
            <person name="Shibahara T."/>
            <person name="Tanaka T."/>
            <person name="Ishii S."/>
            <person name="Yamamoto J."/>
            <person name="Saito K."/>
            <person name="Kawai Y."/>
            <person name="Isono Y."/>
            <person name="Nakamura Y."/>
            <person name="Nagahari K."/>
            <person name="Murakami K."/>
            <person name="Yasuda T."/>
            <person name="Iwayanagi T."/>
            <person name="Wagatsuma M."/>
            <person name="Shiratori A."/>
            <person name="Sudo H."/>
            <person name="Hosoiri T."/>
            <person name="Kaku Y."/>
            <person name="Kodaira H."/>
            <person name="Kondo H."/>
            <person name="Sugawara M."/>
            <person name="Takahashi M."/>
            <person name="Kanda K."/>
            <person name="Yokoi T."/>
            <person name="Furuya T."/>
            <person name="Kikkawa E."/>
            <person name="Omura Y."/>
            <person name="Abe K."/>
            <person name="Kamihara K."/>
            <person name="Katsuta N."/>
            <person name="Sato K."/>
            <person name="Tanikawa M."/>
            <person name="Yamazaki M."/>
            <person name="Ninomiya K."/>
            <person name="Ishibashi T."/>
            <person name="Yamashita H."/>
            <person name="Murakawa K."/>
            <person name="Fujimori K."/>
            <person name="Tanai H."/>
            <person name="Kimata M."/>
            <person name="Watanabe M."/>
            <person name="Hiraoka S."/>
            <person name="Chiba Y."/>
            <person name="Ishida S."/>
            <person name="Ono Y."/>
            <person name="Takiguchi S."/>
            <person name="Watanabe S."/>
            <person name="Yosida M."/>
            <person name="Hotuta T."/>
            <person name="Kusano J."/>
            <person name="Kanehori K."/>
            <person name="Takahashi-Fujii A."/>
            <person name="Hara H."/>
            <person name="Tanase T.-O."/>
            <person name="Nomura Y."/>
            <person name="Togiya S."/>
            <person name="Komai F."/>
            <person name="Hara R."/>
            <person name="Takeuchi K."/>
            <person name="Arita M."/>
            <person name="Imose N."/>
            <person name="Musashino K."/>
            <person name="Yuuki H."/>
            <person name="Oshima A."/>
            <person name="Sasaki N."/>
            <person name="Aotsuka S."/>
            <person name="Yoshikawa Y."/>
            <person name="Matsunawa H."/>
            <person name="Ichihara T."/>
            <person name="Shiohata N."/>
            <person name="Sano S."/>
            <person name="Moriya S."/>
            <person name="Momiyama H."/>
            <person name="Satoh N."/>
            <person name="Takami S."/>
            <person name="Terashima Y."/>
            <person name="Suzuki O."/>
            <person name="Nakagawa S."/>
            <person name="Senoh A."/>
            <person name="Mizoguchi H."/>
            <person name="Goto Y."/>
            <person name="Shimizu F."/>
            <person name="Wakebe H."/>
            <person name="Hishigaki H."/>
            <person name="Watanabe T."/>
            <person name="Sugiyama A."/>
            <person name="Takemoto M."/>
            <person name="Kawakami B."/>
            <person name="Yamazaki M."/>
            <person name="Watanabe K."/>
            <person name="Kumagai A."/>
            <person name="Itakura S."/>
            <person name="Fukuzumi Y."/>
            <person name="Fujimori Y."/>
            <person name="Komiyama M."/>
            <person name="Tashiro H."/>
            <person name="Tanigami A."/>
            <person name="Fujiwara T."/>
            <person name="Ono T."/>
            <person name="Yamada K."/>
            <person name="Fujii Y."/>
            <person name="Ozaki K."/>
            <person name="Hirao M."/>
            <person name="Ohmori Y."/>
            <person name="Kawabata A."/>
            <person name="Hikiji T."/>
            <person name="Kobatake N."/>
            <person name="Inagaki H."/>
            <person name="Ikema Y."/>
            <person name="Okamoto S."/>
            <person name="Okitani R."/>
            <person name="Kawakami T."/>
            <person name="Noguchi S."/>
            <person name="Itoh T."/>
            <person name="Shigeta K."/>
            <person name="Senba T."/>
            <person name="Matsumura K."/>
            <person name="Nakajima Y."/>
            <person name="Mizuno T."/>
            <person name="Morinaga M."/>
            <person name="Sasaki M."/>
            <person name="Togashi T."/>
            <person name="Oyama M."/>
            <person name="Hata H."/>
            <person name="Watanabe M."/>
            <person name="Komatsu T."/>
            <person name="Mizushima-Sugano J."/>
            <person name="Satoh T."/>
            <person name="Shirai Y."/>
            <person name="Takahashi Y."/>
            <person name="Nakagawa K."/>
            <person name="Okumura K."/>
            <person name="Nagase T."/>
            <person name="Nomura N."/>
            <person name="Kikuchi H."/>
            <person name="Masuho Y."/>
            <person name="Yamashita R."/>
            <person name="Nakai K."/>
            <person name="Yada T."/>
            <person name="Nakamura Y."/>
            <person name="Ohara O."/>
            <person name="Isogai T."/>
            <person name="Sugano S."/>
        </authorList>
    </citation>
    <scope>NUCLEOTIDE SEQUENCE [LARGE SCALE MRNA] (ISOFORMS 1 AND 5)</scope>
    <source>
        <tissue>Caudate nucleus</tissue>
        <tissue>Colon</tissue>
    </source>
</reference>
<reference key="4">
    <citation type="submission" date="2005-09" db="EMBL/GenBank/DDBJ databases">
        <authorList>
            <person name="Mural R.J."/>
            <person name="Istrail S."/>
            <person name="Sutton G.G."/>
            <person name="Florea L."/>
            <person name="Halpern A.L."/>
            <person name="Mobarry C.M."/>
            <person name="Lippert R."/>
            <person name="Walenz B."/>
            <person name="Shatkay H."/>
            <person name="Dew I."/>
            <person name="Miller J.R."/>
            <person name="Flanigan M.J."/>
            <person name="Edwards N.J."/>
            <person name="Bolanos R."/>
            <person name="Fasulo D."/>
            <person name="Halldorsson B.V."/>
            <person name="Hannenhalli S."/>
            <person name="Turner R."/>
            <person name="Yooseph S."/>
            <person name="Lu F."/>
            <person name="Nusskern D.R."/>
            <person name="Shue B.C."/>
            <person name="Zheng X.H."/>
            <person name="Zhong F."/>
            <person name="Delcher A.L."/>
            <person name="Huson D.H."/>
            <person name="Kravitz S.A."/>
            <person name="Mouchard L."/>
            <person name="Reinert K."/>
            <person name="Remington K.A."/>
            <person name="Clark A.G."/>
            <person name="Waterman M.S."/>
            <person name="Eichler E.E."/>
            <person name="Adams M.D."/>
            <person name="Hunkapiller M.W."/>
            <person name="Myers E.W."/>
            <person name="Venter J.C."/>
        </authorList>
    </citation>
    <scope>NUCLEOTIDE SEQUENCE [LARGE SCALE GENOMIC DNA]</scope>
</reference>
<reference key="5">
    <citation type="journal article" date="2004" name="Genome Res.">
        <title>The status, quality, and expansion of the NIH full-length cDNA project: the Mammalian Gene Collection (MGC).</title>
        <authorList>
            <consortium name="The MGC Project Team"/>
        </authorList>
    </citation>
    <scope>NUCLEOTIDE SEQUENCE [LARGE SCALE MRNA] (ISOFORMS 1 AND 2)</scope>
    <source>
        <tissue>Brain</tissue>
        <tissue>Ovary</tissue>
    </source>
</reference>
<reference key="6">
    <citation type="submission" date="2005-08" db="EMBL/GenBank/DDBJ databases">
        <authorList>
            <person name="Zhou G."/>
            <person name="Nong W."/>
            <person name="Li H."/>
            <person name="Ke R."/>
            <person name="Shen C."/>
            <person name="Zhong G."/>
            <person name="Zheng Z."/>
            <person name="Liang M."/>
            <person name="Tang Z."/>
            <person name="Wen S."/>
            <person name="Lin L."/>
            <person name="Yang S."/>
        </authorList>
    </citation>
    <scope>NUCLEOTIDE SEQUENCE [LARGE SCALE MRNA] OF 97-420 (ISOFORM 3)</scope>
</reference>
<reference key="7">
    <citation type="journal article" date="2009" name="Cell. Mol. Immunol.">
        <title>Recombinant expression of a novel human transcriptional repressor HMBOX1 and preparation of anti-HMBOX1 monoclonal antibody.</title>
        <authorList>
            <person name="Dai J."/>
            <person name="Wu L."/>
            <person name="Zhang C."/>
            <person name="Zheng X."/>
            <person name="Tian Z."/>
            <person name="Zhang J."/>
        </authorList>
    </citation>
    <scope>SUBCELLULAR LOCATION</scope>
    <scope>TISSUE SPECIFICITY</scope>
</reference>
<reference key="8">
    <citation type="journal article" date="2009" name="Sci. Signal.">
        <title>Quantitative phosphoproteomic analysis of T cell receptor signaling reveals system-wide modulation of protein-protein interactions.</title>
        <authorList>
            <person name="Mayya V."/>
            <person name="Lundgren D.H."/>
            <person name="Hwang S.-I."/>
            <person name="Rezaul K."/>
            <person name="Wu L."/>
            <person name="Eng J.K."/>
            <person name="Rodionov V."/>
            <person name="Han D.K."/>
        </authorList>
    </citation>
    <scope>IDENTIFICATION BY MASS SPECTROMETRY [LARGE SCALE ANALYSIS]</scope>
    <source>
        <tissue>Leukemic T-cell</tissue>
    </source>
</reference>
<reference key="9">
    <citation type="journal article" date="2010" name="Sci. Signal.">
        <title>Quantitative phosphoproteomics reveals widespread full phosphorylation site occupancy during mitosis.</title>
        <authorList>
            <person name="Olsen J.V."/>
            <person name="Vermeulen M."/>
            <person name="Santamaria A."/>
            <person name="Kumar C."/>
            <person name="Miller M.L."/>
            <person name="Jensen L.J."/>
            <person name="Gnad F."/>
            <person name="Cox J."/>
            <person name="Jensen T.S."/>
            <person name="Nigg E.A."/>
            <person name="Brunak S."/>
            <person name="Mann M."/>
        </authorList>
    </citation>
    <scope>IDENTIFICATION BY MASS SPECTROMETRY [LARGE SCALE ANALYSIS]</scope>
    <source>
        <tissue>Cervix carcinoma</tissue>
    </source>
</reference>
<reference key="10">
    <citation type="journal article" date="2011" name="Sci. Signal.">
        <title>System-wide temporal characterization of the proteome and phosphoproteome of human embryonic stem cell differentiation.</title>
        <authorList>
            <person name="Rigbolt K.T."/>
            <person name="Prokhorova T.A."/>
            <person name="Akimov V."/>
            <person name="Henningsen J."/>
            <person name="Johansen P.T."/>
            <person name="Kratchmarova I."/>
            <person name="Kassem M."/>
            <person name="Mann M."/>
            <person name="Olsen J.V."/>
            <person name="Blagoev B."/>
        </authorList>
    </citation>
    <scope>IDENTIFICATION BY MASS SPECTROMETRY [LARGE SCALE ANALYSIS]</scope>
</reference>
<reference key="11">
    <citation type="journal article" date="2013" name="J. Cell Sci.">
        <title>The telomere-associated homeobox-containing protein TAH1/HMBOX1 participates in telomere maintenance in ALT cells.</title>
        <authorList>
            <person name="Feng X."/>
            <person name="Luo Z."/>
            <person name="Jiang S."/>
            <person name="Li F."/>
            <person name="Han X."/>
            <person name="Hu Y."/>
            <person name="Wang D."/>
            <person name="Zhao Y."/>
            <person name="Ma W."/>
            <person name="Liu D."/>
            <person name="Huang J."/>
            <person name="Songyang Z."/>
        </authorList>
    </citation>
    <scope>FUNCTION</scope>
    <scope>SUBCELLULAR LOCATION</scope>
    <scope>DOMAIN</scope>
</reference>
<reference key="12">
    <citation type="journal article" date="2013" name="J. Proteome Res.">
        <title>Toward a comprehensive characterization of a human cancer cell phosphoproteome.</title>
        <authorList>
            <person name="Zhou H."/>
            <person name="Di Palma S."/>
            <person name="Preisinger C."/>
            <person name="Peng M."/>
            <person name="Polat A.N."/>
            <person name="Heck A.J."/>
            <person name="Mohammed S."/>
        </authorList>
    </citation>
    <scope>PHOSPHORYLATION [LARGE SCALE ANALYSIS] AT SER-148 AND SER-170</scope>
    <scope>IDENTIFICATION BY MASS SPECTROMETRY [LARGE SCALE ANALYSIS]</scope>
    <source>
        <tissue>Cervix carcinoma</tissue>
        <tissue>Erythroleukemia</tissue>
    </source>
</reference>
<reference key="13">
    <citation type="journal article" date="2014" name="Nat. Struct. Mol. Biol.">
        <title>Uncovering global SUMOylation signaling networks in a site-specific manner.</title>
        <authorList>
            <person name="Hendriks I.A."/>
            <person name="D'Souza R.C."/>
            <person name="Yang B."/>
            <person name="Verlaan-de Vries M."/>
            <person name="Mann M."/>
            <person name="Vertegaal A.C."/>
        </authorList>
    </citation>
    <scope>SUMOYLATION [LARGE SCALE ANALYSIS] AT LYS-413</scope>
    <scope>IDENTIFICATION BY MASS SPECTROMETRY [LARGE SCALE ANALYSIS]</scope>
</reference>
<reference key="14">
    <citation type="journal article" date="2014" name="Proc. Natl. Acad. Sci. U.S.A.">
        <title>Mapping of SUMO sites and analysis of SUMOylation changes induced by external stimuli.</title>
        <authorList>
            <person name="Impens F."/>
            <person name="Radoshevich L."/>
            <person name="Cossart P."/>
            <person name="Ribet D."/>
        </authorList>
    </citation>
    <scope>SUMOYLATION [LARGE SCALE ANALYSIS] AT LYS-413</scope>
    <scope>IDENTIFICATION BY MASS SPECTROMETRY [LARGE SCALE ANALYSIS]</scope>
</reference>
<reference key="15">
    <citation type="journal article" date="2015" name="Cell Rep.">
        <title>SUMO-2 orchestrates chromatin modifiers in response to DNA damage.</title>
        <authorList>
            <person name="Hendriks I.A."/>
            <person name="Treffers L.W."/>
            <person name="Verlaan-de Vries M."/>
            <person name="Olsen J.V."/>
            <person name="Vertegaal A.C."/>
        </authorList>
    </citation>
    <scope>SUMOYLATION [LARGE SCALE ANALYSIS] AT LYS-413</scope>
    <scope>IDENTIFICATION BY MASS SPECTROMETRY [LARGE SCALE ANALYSIS]</scope>
</reference>
<reference key="16">
    <citation type="journal article" date="2015" name="Mol. Cell. Proteomics">
        <title>System-wide analysis of SUMOylation dynamics in response to replication stress reveals novel small ubiquitin-like modified target proteins and acceptor lysines relevant for genome stability.</title>
        <authorList>
            <person name="Xiao Z."/>
            <person name="Chang J.G."/>
            <person name="Hendriks I.A."/>
            <person name="Sigurdsson J.O."/>
            <person name="Olsen J.V."/>
            <person name="Vertegaal A.C."/>
        </authorList>
    </citation>
    <scope>SUMOYLATION [LARGE SCALE ANALYSIS] AT LYS-161; LYS-174; LYS-217 AND LYS-413</scope>
    <scope>IDENTIFICATION BY MASS SPECTROMETRY [LARGE SCALE ANALYSIS]</scope>
</reference>
<reference key="17">
    <citation type="journal article" date="2017" name="Nat. Struct. Mol. Biol.">
        <title>Site-specific mapping of the human SUMO proteome reveals co-modification with phosphorylation.</title>
        <authorList>
            <person name="Hendriks I.A."/>
            <person name="Lyon D."/>
            <person name="Young C."/>
            <person name="Jensen L.J."/>
            <person name="Vertegaal A.C."/>
            <person name="Nielsen M.L."/>
        </authorList>
    </citation>
    <scope>SUMOYLATION [LARGE SCALE ANALYSIS] AT LYS-60; LYS-131; LYS-161; LYS-174; LYS-217; LYS-310 AND LYS-413</scope>
    <scope>IDENTIFICATION BY MASS SPECTROMETRY [LARGE SCALE ANALYSIS]</scope>
</reference>
<reference key="18">
    <citation type="submission" date="2005-11" db="PDB data bank">
        <title>Solution structure of the homeobox domain of the human hypothetical protein FLJ21616.</title>
        <authorList>
            <consortium name="RIKEN structural genomics initiative (RSGI)"/>
        </authorList>
    </citation>
    <scope>STRUCTURE BY NMR OF 268-350</scope>
</reference>
<reference key="19">
    <citation type="journal article" date="2013" name="EMBO J.">
        <title>HOT1 is a mammalian direct telomere repeat-binding protein contributing to telomerase recruitment.</title>
        <authorList>
            <person name="Kappei D."/>
            <person name="Butter F."/>
            <person name="Benda C."/>
            <person name="Scheibe M."/>
            <person name="Draskovic I."/>
            <person name="Stevense M."/>
            <person name="Novo C.L."/>
            <person name="Basquin C."/>
            <person name="Araki M."/>
            <person name="Araki K."/>
            <person name="Krastev D.B."/>
            <person name="Kittler R."/>
            <person name="Jessberger R."/>
            <person name="Londono-Vallejo J.A."/>
            <person name="Mann M."/>
            <person name="Buchholz F."/>
        </authorList>
    </citation>
    <scope>X-RAY CRYSTALLOGRAPHY (2.90 ANGSTROMS) OF 233-345 IN COMPLEX WITH DNA</scope>
    <scope>FUNCTION</scope>
    <scope>ASSOCIATION WITH THE TELOMERASE COMPLEX</scope>
    <scope>INTERACTION WITH DKC1; XRCC6 AND COIL</scope>
    <scope>SUBCELLULAR LOCATION</scope>
    <scope>DOMAIN</scope>
    <scope>MUTAGENESIS OF ARG-271; LYS-325; TYR-327; ARG-334; LYS-335; LYS-338 AND ARG-339</scope>
    <scope>IDENTIFICATION BY MASS SPECTROMETRY</scope>
</reference>
<accession>Q6NT76</accession>
<accession>A4K385</accession>
<accession>A8K3R8</accession>
<accession>B4DHY5</accession>
<accession>D3DSU0</accession>
<accession>Q3Y6P1</accession>
<accession>Q96GS5</accession>
<accession>Q9H701</accession>
<name>HMBX1_HUMAN</name>
<dbReference type="EMBL" id="AY522342">
    <property type="protein sequence ID" value="AAS76643.1"/>
    <property type="molecule type" value="mRNA"/>
</dbReference>
<dbReference type="EMBL" id="DQ269478">
    <property type="protein sequence ID" value="ABB82947.1"/>
    <property type="molecule type" value="mRNA"/>
</dbReference>
<dbReference type="EMBL" id="AK025269">
    <property type="protein sequence ID" value="BAB15099.1"/>
    <property type="status" value="ALT_INIT"/>
    <property type="molecule type" value="mRNA"/>
</dbReference>
<dbReference type="EMBL" id="AK290683">
    <property type="protein sequence ID" value="BAF83372.1"/>
    <property type="molecule type" value="mRNA"/>
</dbReference>
<dbReference type="EMBL" id="AK295320">
    <property type="protein sequence ID" value="BAG58297.1"/>
    <property type="molecule type" value="mRNA"/>
</dbReference>
<dbReference type="EMBL" id="CH471080">
    <property type="protein sequence ID" value="EAW63496.1"/>
    <property type="molecule type" value="Genomic_DNA"/>
</dbReference>
<dbReference type="EMBL" id="CH471080">
    <property type="protein sequence ID" value="EAW63499.1"/>
    <property type="molecule type" value="Genomic_DNA"/>
</dbReference>
<dbReference type="EMBL" id="CH471080">
    <property type="protein sequence ID" value="EAW63500.1"/>
    <property type="molecule type" value="Genomic_DNA"/>
</dbReference>
<dbReference type="EMBL" id="BC009259">
    <property type="protein sequence ID" value="AAH09259.2"/>
    <property type="molecule type" value="mRNA"/>
</dbReference>
<dbReference type="EMBL" id="BC069242">
    <property type="protein sequence ID" value="AAH69242.1"/>
    <property type="molecule type" value="mRNA"/>
</dbReference>
<dbReference type="EMBL" id="DQ153248">
    <property type="protein sequence ID" value="AAZ81565.1"/>
    <property type="molecule type" value="mRNA"/>
</dbReference>
<dbReference type="CCDS" id="CCDS6071.1">
    <molecule id="Q6NT76-1"/>
</dbReference>
<dbReference type="CCDS" id="CCDS83273.1">
    <molecule id="Q6NT76-5"/>
</dbReference>
<dbReference type="CCDS" id="CCDS83274.1">
    <molecule id="Q6NT76-2"/>
</dbReference>
<dbReference type="RefSeq" id="NP_001129198.1">
    <molecule id="Q6NT76-1"/>
    <property type="nucleotide sequence ID" value="NM_001135726.3"/>
</dbReference>
<dbReference type="RefSeq" id="NP_001311311.1">
    <molecule id="Q6NT76-1"/>
    <property type="nucleotide sequence ID" value="NM_001324382.2"/>
</dbReference>
<dbReference type="RefSeq" id="NP_001311312.1">
    <property type="nucleotide sequence ID" value="NM_001324383.1"/>
</dbReference>
<dbReference type="RefSeq" id="NP_001311313.1">
    <property type="nucleotide sequence ID" value="NM_001324384.1"/>
</dbReference>
<dbReference type="RefSeq" id="NP_001311314.1">
    <property type="nucleotide sequence ID" value="NM_001324385.1"/>
</dbReference>
<dbReference type="RefSeq" id="NP_001311315.1">
    <property type="nucleotide sequence ID" value="NM_001324386.1"/>
</dbReference>
<dbReference type="RefSeq" id="NP_001311316.1">
    <molecule id="Q6NT76-3"/>
    <property type="nucleotide sequence ID" value="NM_001324387.2"/>
</dbReference>
<dbReference type="RefSeq" id="NP_001311317.1">
    <molecule id="Q6NT76-3"/>
    <property type="nucleotide sequence ID" value="NM_001324388.2"/>
</dbReference>
<dbReference type="RefSeq" id="NP_001311318.1">
    <property type="nucleotide sequence ID" value="NM_001324389.1"/>
</dbReference>
<dbReference type="RefSeq" id="NP_001311319.1">
    <property type="nucleotide sequence ID" value="NM_001324390.1"/>
</dbReference>
<dbReference type="RefSeq" id="NP_001311320.1">
    <molecule id="Q6NT76-2"/>
    <property type="nucleotide sequence ID" value="NM_001324391.2"/>
</dbReference>
<dbReference type="RefSeq" id="NP_001311321.1">
    <molecule id="Q6NT76-2"/>
    <property type="nucleotide sequence ID" value="NM_001324392.1"/>
</dbReference>
<dbReference type="RefSeq" id="NP_001311322.1">
    <property type="nucleotide sequence ID" value="NM_001324393.1"/>
</dbReference>
<dbReference type="RefSeq" id="NP_001311323.1">
    <property type="nucleotide sequence ID" value="NM_001324394.1"/>
</dbReference>
<dbReference type="RefSeq" id="NP_001311324.1">
    <property type="nucleotide sequence ID" value="NM_001324395.1"/>
</dbReference>
<dbReference type="RefSeq" id="NP_001317427.1">
    <molecule id="Q6NT76-5"/>
    <property type="nucleotide sequence ID" value="NM_001330498.2"/>
</dbReference>
<dbReference type="RefSeq" id="NP_078843.2">
    <molecule id="Q6NT76-1"/>
    <property type="nucleotide sequence ID" value="NM_024567.4"/>
</dbReference>
<dbReference type="RefSeq" id="XP_016869314.1">
    <molecule id="Q6NT76-4"/>
    <property type="nucleotide sequence ID" value="XM_017013825.2"/>
</dbReference>
<dbReference type="RefSeq" id="XP_047278176.1">
    <molecule id="Q6NT76-5"/>
    <property type="nucleotide sequence ID" value="XM_047422220.1"/>
</dbReference>
<dbReference type="RefSeq" id="XP_047278178.1">
    <molecule id="Q6NT76-1"/>
    <property type="nucleotide sequence ID" value="XM_047422222.1"/>
</dbReference>
<dbReference type="RefSeq" id="XP_047278179.1">
    <molecule id="Q6NT76-1"/>
    <property type="nucleotide sequence ID" value="XM_047422223.1"/>
</dbReference>
<dbReference type="RefSeq" id="XP_047278180.1">
    <molecule id="Q6NT76-1"/>
    <property type="nucleotide sequence ID" value="XM_047422224.1"/>
</dbReference>
<dbReference type="RefSeq" id="XP_047278185.1">
    <molecule id="Q6NT76-4"/>
    <property type="nucleotide sequence ID" value="XM_047422229.1"/>
</dbReference>
<dbReference type="RefSeq" id="XP_054217181.1">
    <molecule id="Q6NT76-5"/>
    <property type="nucleotide sequence ID" value="XM_054361206.1"/>
</dbReference>
<dbReference type="RefSeq" id="XP_054217183.1">
    <molecule id="Q6NT76-1"/>
    <property type="nucleotide sequence ID" value="XM_054361208.1"/>
</dbReference>
<dbReference type="RefSeq" id="XP_054217184.1">
    <molecule id="Q6NT76-1"/>
    <property type="nucleotide sequence ID" value="XM_054361209.1"/>
</dbReference>
<dbReference type="RefSeq" id="XP_054217185.1">
    <molecule id="Q6NT76-1"/>
    <property type="nucleotide sequence ID" value="XM_054361210.1"/>
</dbReference>
<dbReference type="RefSeq" id="XP_054217190.1">
    <molecule id="Q6NT76-4"/>
    <property type="nucleotide sequence ID" value="XM_054361215.1"/>
</dbReference>
<dbReference type="RefSeq" id="XP_054217191.1">
    <molecule id="Q6NT76-4"/>
    <property type="nucleotide sequence ID" value="XM_054361216.1"/>
</dbReference>
<dbReference type="PDB" id="2CUF">
    <property type="method" value="NMR"/>
    <property type="chains" value="A=268-350"/>
</dbReference>
<dbReference type="PDB" id="4J19">
    <property type="method" value="X-ray"/>
    <property type="resolution" value="2.90 A"/>
    <property type="chains" value="A/B=233-345"/>
</dbReference>
<dbReference type="PDBsum" id="2CUF"/>
<dbReference type="PDBsum" id="4J19"/>
<dbReference type="BMRB" id="Q6NT76"/>
<dbReference type="SMR" id="Q6NT76"/>
<dbReference type="BioGRID" id="122750">
    <property type="interactions" value="133"/>
</dbReference>
<dbReference type="FunCoup" id="Q6NT76">
    <property type="interactions" value="3921"/>
</dbReference>
<dbReference type="IntAct" id="Q6NT76">
    <property type="interactions" value="127"/>
</dbReference>
<dbReference type="MINT" id="Q6NT76"/>
<dbReference type="STRING" id="9606.ENSP00000430110"/>
<dbReference type="GlyGen" id="Q6NT76">
    <property type="glycosylation" value="1 site, 1 O-linked glycan (1 site)"/>
</dbReference>
<dbReference type="iPTMnet" id="Q6NT76"/>
<dbReference type="PhosphoSitePlus" id="Q6NT76"/>
<dbReference type="BioMuta" id="HMBOX1"/>
<dbReference type="DMDM" id="74758116"/>
<dbReference type="jPOST" id="Q6NT76"/>
<dbReference type="MassIVE" id="Q6NT76"/>
<dbReference type="PaxDb" id="9606-ENSP00000380516"/>
<dbReference type="PeptideAtlas" id="Q6NT76"/>
<dbReference type="ProteomicsDB" id="66662">
    <molecule id="Q6NT76-1"/>
</dbReference>
<dbReference type="ProteomicsDB" id="66663">
    <molecule id="Q6NT76-2"/>
</dbReference>
<dbReference type="ProteomicsDB" id="66664">
    <molecule id="Q6NT76-3"/>
</dbReference>
<dbReference type="ProteomicsDB" id="66665">
    <molecule id="Q6NT76-4"/>
</dbReference>
<dbReference type="ProteomicsDB" id="66666">
    <molecule id="Q6NT76-5"/>
</dbReference>
<dbReference type="Pumba" id="Q6NT76"/>
<dbReference type="TopDownProteomics" id="Q6NT76-4">
    <molecule id="Q6NT76-4"/>
</dbReference>
<dbReference type="Antibodypedia" id="10471">
    <property type="antibodies" value="169 antibodies from 28 providers"/>
</dbReference>
<dbReference type="DNASU" id="79618"/>
<dbReference type="Ensembl" id="ENST00000287701.15">
    <molecule id="Q6NT76-1"/>
    <property type="protein sequence ID" value="ENSP00000287701.10"/>
    <property type="gene ID" value="ENSG00000147421.18"/>
</dbReference>
<dbReference type="Ensembl" id="ENST00000397358.7">
    <molecule id="Q6NT76-1"/>
    <property type="protein sequence ID" value="ENSP00000380516.3"/>
    <property type="gene ID" value="ENSG00000147421.18"/>
</dbReference>
<dbReference type="Ensembl" id="ENST00000521516.5">
    <molecule id="Q6NT76-4"/>
    <property type="protein sequence ID" value="ENSP00000430238.1"/>
    <property type="gene ID" value="ENSG00000147421.18"/>
</dbReference>
<dbReference type="Ensembl" id="ENST00000524238.3">
    <molecule id="Q6NT76-5"/>
    <property type="protein sequence ID" value="ENSP00000430110.1"/>
    <property type="gene ID" value="ENSG00000147421.18"/>
</dbReference>
<dbReference type="Ensembl" id="ENST00000558662.5">
    <molecule id="Q6NT76-2"/>
    <property type="protein sequence ID" value="ENSP00000453211.1"/>
    <property type="gene ID" value="ENSG00000147421.18"/>
</dbReference>
<dbReference type="GeneID" id="79618"/>
<dbReference type="KEGG" id="hsa:79618"/>
<dbReference type="MANE-Select" id="ENST00000287701.15">
    <property type="protein sequence ID" value="ENSP00000287701.10"/>
    <property type="RefSeq nucleotide sequence ID" value="NM_001135726.3"/>
    <property type="RefSeq protein sequence ID" value="NP_001129198.1"/>
</dbReference>
<dbReference type="UCSC" id="uc003xhd.5">
    <molecule id="Q6NT76-1"/>
    <property type="organism name" value="human"/>
</dbReference>
<dbReference type="AGR" id="HGNC:26137"/>
<dbReference type="CTD" id="79618"/>
<dbReference type="DisGeNET" id="79618"/>
<dbReference type="GeneCards" id="HMBOX1"/>
<dbReference type="HGNC" id="HGNC:26137">
    <property type="gene designation" value="HMBOX1"/>
</dbReference>
<dbReference type="HPA" id="ENSG00000147421">
    <property type="expression patterns" value="Low tissue specificity"/>
</dbReference>
<dbReference type="MIM" id="618610">
    <property type="type" value="gene"/>
</dbReference>
<dbReference type="neXtProt" id="NX_Q6NT76"/>
<dbReference type="OpenTargets" id="ENSG00000147421"/>
<dbReference type="PharmGKB" id="PA143485490"/>
<dbReference type="VEuPathDB" id="HostDB:ENSG00000147421"/>
<dbReference type="eggNOG" id="ENOG502QQSR">
    <property type="taxonomic scope" value="Eukaryota"/>
</dbReference>
<dbReference type="GeneTree" id="ENSGT00940000154928"/>
<dbReference type="HOGENOM" id="CLU_052355_1_0_1"/>
<dbReference type="InParanoid" id="Q6NT76"/>
<dbReference type="OMA" id="XAAILES"/>
<dbReference type="OrthoDB" id="5856131at2759"/>
<dbReference type="PAN-GO" id="Q6NT76">
    <property type="GO annotations" value="1 GO annotation based on evolutionary models"/>
</dbReference>
<dbReference type="PhylomeDB" id="Q6NT76"/>
<dbReference type="TreeFam" id="TF320327"/>
<dbReference type="PathwayCommons" id="Q6NT76"/>
<dbReference type="SignaLink" id="Q6NT76"/>
<dbReference type="SIGNOR" id="Q6NT76"/>
<dbReference type="BioGRID-ORCS" id="79618">
    <property type="hits" value="14 hits in 1178 CRISPR screens"/>
</dbReference>
<dbReference type="CD-CODE" id="6F24707C">
    <property type="entry name" value="Cajal body"/>
</dbReference>
<dbReference type="CD-CODE" id="B5B9A610">
    <property type="entry name" value="PML body"/>
</dbReference>
<dbReference type="ChiTaRS" id="HMBOX1">
    <property type="organism name" value="human"/>
</dbReference>
<dbReference type="EvolutionaryTrace" id="Q6NT76"/>
<dbReference type="GenomeRNAi" id="79618"/>
<dbReference type="Pharos" id="Q6NT76">
    <property type="development level" value="Tbio"/>
</dbReference>
<dbReference type="PRO" id="PR:Q6NT76"/>
<dbReference type="Proteomes" id="UP000005640">
    <property type="component" value="Chromosome 8"/>
</dbReference>
<dbReference type="RNAct" id="Q6NT76">
    <property type="molecule type" value="protein"/>
</dbReference>
<dbReference type="Bgee" id="ENSG00000147421">
    <property type="expression patterns" value="Expressed in colonic epithelium and 201 other cell types or tissues"/>
</dbReference>
<dbReference type="ExpressionAtlas" id="Q6NT76">
    <property type="expression patterns" value="baseline and differential"/>
</dbReference>
<dbReference type="GO" id="GO:0015030">
    <property type="term" value="C:Cajal body"/>
    <property type="evidence" value="ECO:0007669"/>
    <property type="project" value="UniProtKB-SubCell"/>
</dbReference>
<dbReference type="GO" id="GO:0005813">
    <property type="term" value="C:centrosome"/>
    <property type="evidence" value="ECO:0000314"/>
    <property type="project" value="HPA"/>
</dbReference>
<dbReference type="GO" id="GO:0000785">
    <property type="term" value="C:chromatin"/>
    <property type="evidence" value="ECO:0000247"/>
    <property type="project" value="NTNU_SB"/>
</dbReference>
<dbReference type="GO" id="GO:0000781">
    <property type="term" value="C:chromosome, telomeric region"/>
    <property type="evidence" value="ECO:0000314"/>
    <property type="project" value="BHF-UCL"/>
</dbReference>
<dbReference type="GO" id="GO:0005737">
    <property type="term" value="C:cytoplasm"/>
    <property type="evidence" value="ECO:0000314"/>
    <property type="project" value="UniProtKB"/>
</dbReference>
<dbReference type="GO" id="GO:0005829">
    <property type="term" value="C:cytosol"/>
    <property type="evidence" value="ECO:0000314"/>
    <property type="project" value="HPA"/>
</dbReference>
<dbReference type="GO" id="GO:0016604">
    <property type="term" value="C:nuclear body"/>
    <property type="evidence" value="ECO:0000314"/>
    <property type="project" value="HPA"/>
</dbReference>
<dbReference type="GO" id="GO:0005654">
    <property type="term" value="C:nucleoplasm"/>
    <property type="evidence" value="ECO:0000314"/>
    <property type="project" value="HPA"/>
</dbReference>
<dbReference type="GO" id="GO:0005634">
    <property type="term" value="C:nucleus"/>
    <property type="evidence" value="ECO:0000314"/>
    <property type="project" value="UniProtKB"/>
</dbReference>
<dbReference type="GO" id="GO:0016605">
    <property type="term" value="C:PML body"/>
    <property type="evidence" value="ECO:0007669"/>
    <property type="project" value="UniProtKB-SubCell"/>
</dbReference>
<dbReference type="GO" id="GO:0003691">
    <property type="term" value="F:double-stranded telomeric DNA binding"/>
    <property type="evidence" value="ECO:0000314"/>
    <property type="project" value="BHF-UCL"/>
</dbReference>
<dbReference type="GO" id="GO:0042802">
    <property type="term" value="F:identical protein binding"/>
    <property type="evidence" value="ECO:0000353"/>
    <property type="project" value="IntAct"/>
</dbReference>
<dbReference type="GO" id="GO:0044877">
    <property type="term" value="F:protein-containing complex binding"/>
    <property type="evidence" value="ECO:0000353"/>
    <property type="project" value="BHF-UCL"/>
</dbReference>
<dbReference type="GO" id="GO:0043565">
    <property type="term" value="F:sequence-specific DNA binding"/>
    <property type="evidence" value="ECO:0000314"/>
    <property type="project" value="NTNU_SB"/>
</dbReference>
<dbReference type="GO" id="GO:1990837">
    <property type="term" value="F:sequence-specific double-stranded DNA binding"/>
    <property type="evidence" value="ECO:0000314"/>
    <property type="project" value="ARUK-UCL"/>
</dbReference>
<dbReference type="GO" id="GO:0042162">
    <property type="term" value="F:telomeric DNA binding"/>
    <property type="evidence" value="ECO:0000314"/>
    <property type="project" value="BHF-UCL"/>
</dbReference>
<dbReference type="GO" id="GO:0045892">
    <property type="term" value="P:negative regulation of DNA-templated transcription"/>
    <property type="evidence" value="ECO:0000314"/>
    <property type="project" value="UniProtKB"/>
</dbReference>
<dbReference type="GO" id="GO:0000122">
    <property type="term" value="P:negative regulation of transcription by RNA polymerase II"/>
    <property type="evidence" value="ECO:0000314"/>
    <property type="project" value="NTNU_SB"/>
</dbReference>
<dbReference type="GO" id="GO:0045893">
    <property type="term" value="P:positive regulation of DNA-templated transcription"/>
    <property type="evidence" value="ECO:0007669"/>
    <property type="project" value="InterPro"/>
</dbReference>
<dbReference type="GO" id="GO:0007004">
    <property type="term" value="P:telomere maintenance via telomerase"/>
    <property type="evidence" value="ECO:0000314"/>
    <property type="project" value="BHF-UCL"/>
</dbReference>
<dbReference type="GO" id="GO:1905324">
    <property type="term" value="P:telomere-telomerase complex assembly"/>
    <property type="evidence" value="ECO:0000314"/>
    <property type="project" value="BHF-UCL"/>
</dbReference>
<dbReference type="CDD" id="cd00086">
    <property type="entry name" value="homeodomain"/>
    <property type="match status" value="1"/>
</dbReference>
<dbReference type="CDD" id="cd00093">
    <property type="entry name" value="HTH_XRE"/>
    <property type="match status" value="1"/>
</dbReference>
<dbReference type="FunFam" id="1.10.10.60:FF:000038">
    <property type="entry name" value="Homeobox-containing protein 1 isoform X2"/>
    <property type="match status" value="1"/>
</dbReference>
<dbReference type="FunFam" id="1.10.260.40:FF:000011">
    <property type="entry name" value="homeobox-containing protein 1 isoform X2"/>
    <property type="match status" value="1"/>
</dbReference>
<dbReference type="Gene3D" id="1.10.10.60">
    <property type="entry name" value="Homeodomain-like"/>
    <property type="match status" value="1"/>
</dbReference>
<dbReference type="Gene3D" id="1.10.260.40">
    <property type="entry name" value="lambda repressor-like DNA-binding domains"/>
    <property type="match status" value="1"/>
</dbReference>
<dbReference type="InterPro" id="IPR001387">
    <property type="entry name" value="Cro/C1-type_HTH"/>
</dbReference>
<dbReference type="InterPro" id="IPR001356">
    <property type="entry name" value="HD"/>
</dbReference>
<dbReference type="InterPro" id="IPR040363">
    <property type="entry name" value="HMBOX1"/>
</dbReference>
<dbReference type="InterPro" id="IPR006899">
    <property type="entry name" value="HNF-1_N"/>
</dbReference>
<dbReference type="InterPro" id="IPR044869">
    <property type="entry name" value="HNF-1_POU"/>
</dbReference>
<dbReference type="InterPro" id="IPR044866">
    <property type="entry name" value="HNF_P1"/>
</dbReference>
<dbReference type="InterPro" id="IPR009057">
    <property type="entry name" value="Homeodomain-like_sf"/>
</dbReference>
<dbReference type="InterPro" id="IPR010982">
    <property type="entry name" value="Lambda_DNA-bd_dom_sf"/>
</dbReference>
<dbReference type="PANTHER" id="PTHR14618:SF0">
    <property type="entry name" value="HOMEOBOX-CONTAINING PROTEIN 1"/>
    <property type="match status" value="1"/>
</dbReference>
<dbReference type="PANTHER" id="PTHR14618">
    <property type="entry name" value="HOMEODOX-CONTAINING PROTEIN 1 HMBOX1"/>
    <property type="match status" value="1"/>
</dbReference>
<dbReference type="Pfam" id="PF04814">
    <property type="entry name" value="HNF-1_N"/>
    <property type="match status" value="1"/>
</dbReference>
<dbReference type="Pfam" id="PF00046">
    <property type="entry name" value="Homeodomain"/>
    <property type="match status" value="1"/>
</dbReference>
<dbReference type="SMART" id="SM00389">
    <property type="entry name" value="HOX"/>
    <property type="match status" value="1"/>
</dbReference>
<dbReference type="SUPFAM" id="SSF46689">
    <property type="entry name" value="Homeodomain-like"/>
    <property type="match status" value="1"/>
</dbReference>
<dbReference type="SUPFAM" id="SSF47413">
    <property type="entry name" value="lambda repressor-like DNA-binding domains"/>
    <property type="match status" value="1"/>
</dbReference>
<dbReference type="PROSITE" id="PS51937">
    <property type="entry name" value="HNF_P1"/>
    <property type="match status" value="1"/>
</dbReference>
<dbReference type="PROSITE" id="PS50071">
    <property type="entry name" value="HOMEOBOX_2"/>
    <property type="match status" value="1"/>
</dbReference>
<dbReference type="PROSITE" id="PS51936">
    <property type="entry name" value="POU_4"/>
    <property type="match status" value="1"/>
</dbReference>
<sequence>MLSSFPVVLLETMSHYTDEPRFTIEQIDLLQRLRRTGMTKHEILHALETLDRLDQEHSDKFGRRSSYGGSSYGNSTNNVPASSSTATASTQTQHSGMSPSPSNSYDTSPQPCTTNQNGRENNERLSTSNGKMSPTRYHANSMGQRSYSFEASEEDLDVDDKVEELMRRDSSVIKEEIKAFLANRRISQAVVAQVTGISQSRISHWLLQQGSDLSEQKKRAFYRWYQLEKTNPGATLSMRPAPIPIEDPEWRQTPPPVSATSGTFRLRRGSRFTWRKECLAVMESYFNENQYPDEAKREEIANACNAVIQKPGKKLSDLERVTSLKVYNWFANRRKEIKRRANIEAAILESHGIDVQSPGGHSNSDDVDGNDYSEQDDSTSHSDHQDPISLAVEMAAVNHTILALARQGANEIKTEALDDD</sequence>
<protein>
    <recommendedName>
        <fullName evidence="13">Homeobox-containing protein 1</fullName>
    </recommendedName>
    <alternativeName>
        <fullName evidence="15">Homeobox telomere-binding protein 1</fullName>
    </alternativeName>
    <alternativeName>
        <fullName evidence="16">Telomere-associated homeobox-containing protein 1</fullName>
    </alternativeName>
</protein>
<keyword id="KW-0002">3D-structure</keyword>
<keyword id="KW-0025">Alternative splicing</keyword>
<keyword id="KW-0158">Chromosome</keyword>
<keyword id="KW-0963">Cytoplasm</keyword>
<keyword id="KW-0238">DNA-binding</keyword>
<keyword id="KW-0371">Homeobox</keyword>
<keyword id="KW-1017">Isopeptide bond</keyword>
<keyword id="KW-0539">Nucleus</keyword>
<keyword id="KW-0597">Phosphoprotein</keyword>
<keyword id="KW-1267">Proteomics identification</keyword>
<keyword id="KW-1185">Reference proteome</keyword>
<keyword id="KW-0779">Telomere</keyword>
<keyword id="KW-0804">Transcription</keyword>
<keyword id="KW-0805">Transcription regulation</keyword>
<keyword id="KW-0832">Ubl conjugation</keyword>
<gene>
    <name evidence="13" type="primary">HMBOX1</name>
    <name evidence="15" type="synonym">HOT1</name>
    <name evidence="16" type="synonym">TAH1</name>
</gene>
<comment type="function">
    <text evidence="1 9 10">Binds directly to 5'-TTAGGG-3' repeats in telomeric DNA (PubMed:23685356, PubMed:23813958). Associates with the telomerase complex at sites of active telomere processing and positively regulates telomere elongation (PubMed:23685356). Important for TERT binding to chromatin, indicating a role in recruitment of the telomerase complex to telomeres (By similarity). Also plays a role in the alternative lengthening of telomeres (ALT) pathway in telomerase-negative cells where it promotes formation and/or maintenance of ALT-associated promyelocytic leukemia bodies (APBs) (PubMed:23813958). Enhances formation of telomere C-circles in ALT cells, suggesting a possible role in telomere recombination (PubMed:23813958). Might also be involved in the DNA damage response at telomeres (PubMed:23813958).</text>
</comment>
<comment type="subunit">
    <text evidence="9">Associates with the telomerase holoenzyme complex. Interacts with DKC1, XRCC6 and COIL.</text>
</comment>
<comment type="interaction">
    <interactant intactId="EBI-2549423">
        <id>Q6NT76</id>
    </interactant>
    <interactant intactId="EBI-9105722">
        <id>Q9NX38</id>
        <label>ABITRAM</label>
    </interactant>
    <organismsDiffer>false</organismsDiffer>
    <experiments>6</experiments>
</comment>
<comment type="interaction">
    <interactant intactId="EBI-2549423">
        <id>Q6NT76</id>
    </interactant>
    <interactant intactId="EBI-10255023">
        <id>Q6ZN18-2</id>
        <label>AEBP2</label>
    </interactant>
    <organismsDiffer>false</organismsDiffer>
    <experiments>6</experiments>
</comment>
<comment type="interaction">
    <interactant intactId="EBI-2549423">
        <id>Q6NT76</id>
    </interactant>
    <interactant intactId="EBI-14100900">
        <id>A1A5B0</id>
        <label>ANKRD36</label>
    </interactant>
    <organismsDiffer>false</organismsDiffer>
    <experiments>3</experiments>
</comment>
<comment type="interaction">
    <interactant intactId="EBI-2549423">
        <id>Q6NT76</id>
    </interactant>
    <interactant intactId="EBI-3916346">
        <id>Q9H672</id>
        <label>ASB7</label>
    </interactant>
    <organismsDiffer>false</organismsDiffer>
    <experiments>4</experiments>
</comment>
<comment type="interaction">
    <interactant intactId="EBI-2549423">
        <id>Q6NT76</id>
    </interactant>
    <interactant intactId="EBI-12104328">
        <id>Q9H672-2</id>
        <label>ASB7</label>
    </interactant>
    <organismsDiffer>false</organismsDiffer>
    <experiments>3</experiments>
</comment>
<comment type="interaction">
    <interactant intactId="EBI-2549423">
        <id>Q6NT76</id>
    </interactant>
    <interactant intactId="EBI-355815">
        <id>P48047</id>
        <label>ATP5PO</label>
    </interactant>
    <organismsDiffer>false</organismsDiffer>
    <experiments>3</experiments>
</comment>
<comment type="interaction">
    <interactant intactId="EBI-2549423">
        <id>Q6NT76</id>
    </interactant>
    <interactant intactId="EBI-741542">
        <id>Q9UIF8</id>
        <label>BAZ2B</label>
    </interactant>
    <organismsDiffer>false</organismsDiffer>
    <experiments>3</experiments>
</comment>
<comment type="interaction">
    <interactant intactId="EBI-2549423">
        <id>Q6NT76</id>
    </interactant>
    <interactant intactId="EBI-10181188">
        <id>Q8N7W2-2</id>
        <label>BEND7</label>
    </interactant>
    <organismsDiffer>false</organismsDiffer>
    <experiments>3</experiments>
</comment>
<comment type="interaction">
    <interactant intactId="EBI-2549423">
        <id>Q6NT76</id>
    </interactant>
    <interactant intactId="EBI-714754">
        <id>O95696</id>
        <label>BRD1</label>
    </interactant>
    <organismsDiffer>false</organismsDiffer>
    <experiments>3</experiments>
</comment>
<comment type="interaction">
    <interactant intactId="EBI-2549423">
        <id>Q6NT76</id>
    </interactant>
    <interactant intactId="EBI-358049">
        <id>Q13895</id>
        <label>BYSL</label>
    </interactant>
    <organismsDiffer>false</organismsDiffer>
    <experiments>8</experiments>
</comment>
<comment type="interaction">
    <interactant intactId="EBI-2549423">
        <id>Q6NT76</id>
    </interactant>
    <interactant intactId="EBI-715389">
        <id>Q9H7E9</id>
        <label>C8orf33</label>
    </interactant>
    <organismsDiffer>false</organismsDiffer>
    <experiments>6</experiments>
</comment>
<comment type="interaction">
    <interactant intactId="EBI-2549423">
        <id>Q6NT76</id>
    </interactant>
    <interactant intactId="EBI-751319">
        <id>Q9H257</id>
        <label>CARD9</label>
    </interactant>
    <organismsDiffer>false</organismsDiffer>
    <experiments>3</experiments>
</comment>
<comment type="interaction">
    <interactant intactId="EBI-2549423">
        <id>Q6NT76</id>
    </interactant>
    <interactant intactId="EBI-712912">
        <id>Q9HC52</id>
        <label>CBX8</label>
    </interactant>
    <organismsDiffer>false</organismsDiffer>
    <experiments>8</experiments>
</comment>
<comment type="interaction">
    <interactant intactId="EBI-2549423">
        <id>Q6NT76</id>
    </interactant>
    <interactant intactId="EBI-3905829">
        <id>P51959</id>
        <label>CCNG1</label>
    </interactant>
    <organismsDiffer>false</organismsDiffer>
    <experiments>3</experiments>
</comment>
<comment type="interaction">
    <interactant intactId="EBI-2549423">
        <id>Q6NT76</id>
    </interactant>
    <interactant intactId="EBI-374980">
        <id>O00311</id>
        <label>CDC7</label>
    </interactant>
    <organismsDiffer>false</organismsDiffer>
    <experiments>3</experiments>
</comment>
<comment type="interaction">
    <interactant intactId="EBI-2549423">
        <id>Q6NT76</id>
    </interactant>
    <interactant intactId="EBI-979174">
        <id>Q53HL2</id>
        <label>CDCA8</label>
    </interactant>
    <organismsDiffer>false</organismsDiffer>
    <experiments>3</experiments>
</comment>
<comment type="interaction">
    <interactant intactId="EBI-2549423">
        <id>Q6NT76</id>
    </interactant>
    <interactant intactId="EBI-746238">
        <id>Q07002</id>
        <label>CDK18</label>
    </interactant>
    <organismsDiffer>false</organismsDiffer>
    <experiments>3</experiments>
</comment>
<comment type="interaction">
    <interactant intactId="EBI-2549423">
        <id>Q6NT76</id>
    </interactant>
    <interactant intactId="EBI-7875264">
        <id>O75553</id>
        <label>DAB1</label>
    </interactant>
    <organismsDiffer>false</organismsDiffer>
    <experiments>3</experiments>
</comment>
<comment type="interaction">
    <interactant intactId="EBI-2549423">
        <id>Q6NT76</id>
    </interactant>
    <interactant intactId="EBI-713091">
        <id>O60832</id>
        <label>DKC1</label>
    </interactant>
    <organismsDiffer>false</organismsDiffer>
    <experiments>2</experiments>
</comment>
<comment type="interaction">
    <interactant intactId="EBI-2549423">
        <id>Q6NT76</id>
    </interactant>
    <interactant intactId="EBI-2795449">
        <id>Q9H147</id>
        <label>DNTTIP1</label>
    </interactant>
    <organismsDiffer>false</organismsDiffer>
    <experiments>3</experiments>
</comment>
<comment type="interaction">
    <interactant intactId="EBI-2549423">
        <id>Q6NT76</id>
    </interactant>
    <interactant intactId="EBI-349105">
        <id>P63167</id>
        <label>DYNLL1</label>
    </interactant>
    <organismsDiffer>false</organismsDiffer>
    <experiments>6</experiments>
</comment>
<comment type="interaction">
    <interactant intactId="EBI-2549423">
        <id>Q6NT76</id>
    </interactant>
    <interactant intactId="EBI-742371">
        <id>Q96FJ2</id>
        <label>DYNLL2</label>
    </interactant>
    <organismsDiffer>false</organismsDiffer>
    <experiments>5</experiments>
</comment>
<comment type="interaction">
    <interactant intactId="EBI-2549423">
        <id>Q6NT76</id>
    </interactant>
    <interactant intactId="EBI-744099">
        <id>Q9H0I2</id>
        <label>ENKD1</label>
    </interactant>
    <organismsDiffer>false</organismsDiffer>
    <experiments>3</experiments>
</comment>
<comment type="interaction">
    <interactant intactId="EBI-2549423">
        <id>Q6NT76</id>
    </interactant>
    <interactant intactId="EBI-751248">
        <id>Q8NE31</id>
        <label>FAM13C</label>
    </interactant>
    <organismsDiffer>false</organismsDiffer>
    <experiments>3</experiments>
</comment>
<comment type="interaction">
    <interactant intactId="EBI-2549423">
        <id>Q6NT76</id>
    </interactant>
    <interactant intactId="EBI-719941">
        <id>Q3B820</id>
        <label>FAM161A</label>
    </interactant>
    <organismsDiffer>false</organismsDiffer>
    <experiments>6</experiments>
</comment>
<comment type="interaction">
    <interactant intactId="EBI-2549423">
        <id>Q6NT76</id>
    </interactant>
    <interactant intactId="EBI-19153639">
        <id>Q9NTX9</id>
        <label>FAM217B</label>
    </interactant>
    <organismsDiffer>false</organismsDiffer>
    <experiments>3</experiments>
</comment>
<comment type="interaction">
    <interactant intactId="EBI-2549423">
        <id>Q6NT76</id>
    </interactant>
    <interactant intactId="EBI-6658203">
        <id>Q86YD7</id>
        <label>FAM90A1</label>
    </interactant>
    <organismsDiffer>false</organismsDiffer>
    <experiments>3</experiments>
</comment>
<comment type="interaction">
    <interactant intactId="EBI-2549423">
        <id>Q6NT76</id>
    </interactant>
    <interactant intactId="EBI-2513774">
        <id>O95363</id>
        <label>FARS2</label>
    </interactant>
    <organismsDiffer>false</organismsDiffer>
    <experiments>3</experiments>
</comment>
<comment type="interaction">
    <interactant intactId="EBI-2549423">
        <id>Q6NT76</id>
    </interactant>
    <interactant intactId="EBI-11987787">
        <id>Q92914</id>
        <label>FGF11</label>
    </interactant>
    <organismsDiffer>false</organismsDiffer>
    <experiments>3</experiments>
</comment>
<comment type="interaction">
    <interactant intactId="EBI-2549423">
        <id>Q6NT76</id>
    </interactant>
    <interactant intactId="EBI-744935">
        <id>Q9BVV2</id>
        <label>FNDC11</label>
    </interactant>
    <organismsDiffer>false</organismsDiffer>
    <experiments>3</experiments>
</comment>
<comment type="interaction">
    <interactant intactId="EBI-2549423">
        <id>Q6NT76</id>
    </interactant>
    <interactant intactId="EBI-741729">
        <id>Q96NE9</id>
        <label>FRMD6</label>
    </interactant>
    <organismsDiffer>false</organismsDiffer>
    <experiments>3</experiments>
</comment>
<comment type="interaction">
    <interactant intactId="EBI-2549423">
        <id>Q6NT76</id>
    </interactant>
    <interactant intactId="EBI-740459">
        <id>P51116</id>
        <label>FXR2</label>
    </interactant>
    <organismsDiffer>false</organismsDiffer>
    <experiments>3</experiments>
</comment>
<comment type="interaction">
    <interactant intactId="EBI-2549423">
        <id>Q6NT76</id>
    </interactant>
    <interactant intactId="EBI-7960826">
        <id>Q8NHY3</id>
        <label>GAS2L2</label>
    </interactant>
    <organismsDiffer>false</organismsDiffer>
    <experiments>3</experiments>
</comment>
<comment type="interaction">
    <interactant intactId="EBI-2549423">
        <id>Q6NT76</id>
    </interactant>
    <interactant intactId="EBI-746682">
        <id>Q9NVN8</id>
        <label>GNL3L</label>
    </interactant>
    <organismsDiffer>false</organismsDiffer>
    <experiments>3</experiments>
</comment>
<comment type="interaction">
    <interactant intactId="EBI-2549423">
        <id>Q6NT76</id>
    </interactant>
    <interactant intactId="EBI-19954058">
        <id>O15499</id>
        <label>GSC2</label>
    </interactant>
    <organismsDiffer>false</organismsDiffer>
    <experiments>3</experiments>
</comment>
<comment type="interaction">
    <interactant intactId="EBI-2549423">
        <id>Q6NT76</id>
    </interactant>
    <interactant intactId="EBI-2549423">
        <id>Q6NT76</id>
        <label>HMBOX1</label>
    </interactant>
    <organismsDiffer>false</organismsDiffer>
    <experiments>6</experiments>
</comment>
<comment type="interaction">
    <interactant intactId="EBI-2549423">
        <id>Q6NT76</id>
    </interactant>
    <interactant intactId="EBI-715611">
        <id>Q9C086</id>
        <label>INO80B</label>
    </interactant>
    <organismsDiffer>false</organismsDiffer>
    <experiments>3</experiments>
</comment>
<comment type="interaction">
    <interactant intactId="EBI-2549423">
        <id>Q6NT76</id>
    </interactant>
    <interactant intactId="EBI-747310">
        <id>O94829</id>
        <label>IPO13</label>
    </interactant>
    <organismsDiffer>false</organismsDiffer>
    <experiments>3</experiments>
</comment>
<comment type="interaction">
    <interactant intactId="EBI-2549423">
        <id>Q6NT76</id>
    </interactant>
    <interactant intactId="EBI-399080">
        <id>Q92993</id>
        <label>KAT5</label>
    </interactant>
    <organismsDiffer>false</organismsDiffer>
    <experiments>6</experiments>
</comment>
<comment type="interaction">
    <interactant intactId="EBI-2549423">
        <id>Q6NT76</id>
    </interactant>
    <interactant intactId="EBI-8472129">
        <id>Q9HAQ2</id>
        <label>KIF9</label>
    </interactant>
    <organismsDiffer>false</organismsDiffer>
    <experiments>3</experiments>
</comment>
<comment type="interaction">
    <interactant intactId="EBI-2549423">
        <id>Q6NT76</id>
    </interactant>
    <interactant intactId="EBI-8639312">
        <id>P25800</id>
        <label>LMO1</label>
    </interactant>
    <organismsDiffer>false</organismsDiffer>
    <experiments>3</experiments>
</comment>
<comment type="interaction">
    <interactant intactId="EBI-2549423">
        <id>Q6NT76</id>
    </interactant>
    <interactant intactId="EBI-11742507">
        <id>Q8TAP4-4</id>
        <label>LMO3</label>
    </interactant>
    <organismsDiffer>false</organismsDiffer>
    <experiments>3</experiments>
</comment>
<comment type="interaction">
    <interactant intactId="EBI-2549423">
        <id>Q6NT76</id>
    </interactant>
    <interactant intactId="EBI-739832">
        <id>Q8TBB1</id>
        <label>LNX1</label>
    </interactant>
    <organismsDiffer>false</organismsDiffer>
    <experiments>3</experiments>
</comment>
<comment type="interaction">
    <interactant intactId="EBI-2549423">
        <id>Q6NT76</id>
    </interactant>
    <interactant intactId="EBI-473834">
        <id>Q9H213</id>
        <label>MAGEH1</label>
    </interactant>
    <organismsDiffer>false</organismsDiffer>
    <experiments>3</experiments>
</comment>
<comment type="interaction">
    <interactant intactId="EBI-2549423">
        <id>Q6NT76</id>
    </interactant>
    <interactant intactId="EBI-348259">
        <id>Q96EZ8</id>
        <label>MCRS1</label>
    </interactant>
    <organismsDiffer>false</organismsDiffer>
    <experiments>8</experiments>
</comment>
<comment type="interaction">
    <interactant intactId="EBI-2549423">
        <id>Q6NT76</id>
    </interactant>
    <interactant intactId="EBI-2864512">
        <id>P50221</id>
        <label>MEOX1</label>
    </interactant>
    <organismsDiffer>false</organismsDiffer>
    <experiments>3</experiments>
</comment>
<comment type="interaction">
    <interactant intactId="EBI-2549423">
        <id>Q6NT76</id>
    </interactant>
    <interactant intactId="EBI-16439278">
        <id>Q6FHY5</id>
        <label>MEOX2</label>
    </interactant>
    <organismsDiffer>false</organismsDiffer>
    <experiments>3</experiments>
</comment>
<comment type="interaction">
    <interactant intactId="EBI-2549423">
        <id>Q6NT76</id>
    </interactant>
    <interactant intactId="EBI-1048159">
        <id>P55081</id>
        <label>MFAP1</label>
    </interactant>
    <organismsDiffer>false</organismsDiffer>
    <experiments>6</experiments>
</comment>
<comment type="interaction">
    <interactant intactId="EBI-2549423">
        <id>Q6NT76</id>
    </interactant>
    <interactant intactId="EBI-14086479">
        <id>Q8IVT4</id>
        <label>MGC50722</label>
    </interactant>
    <organismsDiffer>false</organismsDiffer>
    <experiments>3</experiments>
</comment>
<comment type="interaction">
    <interactant intactId="EBI-2549423">
        <id>Q6NT76</id>
    </interactant>
    <interactant intactId="EBI-399246">
        <id>Q9UBU8</id>
        <label>MORF4L1</label>
    </interactant>
    <organismsDiffer>false</organismsDiffer>
    <experiments>3</experiments>
</comment>
<comment type="interaction">
    <interactant intactId="EBI-2549423">
        <id>Q6NT76</id>
    </interactant>
    <interactant intactId="EBI-10288852">
        <id>Q9UBU8-2</id>
        <label>MORF4L1</label>
    </interactant>
    <organismsDiffer>false</organismsDiffer>
    <experiments>3</experiments>
</comment>
<comment type="interaction">
    <interactant intactId="EBI-2549423">
        <id>Q6NT76</id>
    </interactant>
    <interactant intactId="EBI-399257">
        <id>Q15014</id>
        <label>MORF4L2</label>
    </interactant>
    <organismsDiffer>false</organismsDiffer>
    <experiments>3</experiments>
</comment>
<comment type="interaction">
    <interactant intactId="EBI-2549423">
        <id>Q6NT76</id>
    </interactant>
    <interactant intactId="EBI-5453723">
        <id>Q9Y3B7</id>
        <label>MRPL11</label>
    </interactant>
    <organismsDiffer>false</organismsDiffer>
    <experiments>3</experiments>
</comment>
<comment type="interaction">
    <interactant intactId="EBI-2549423">
        <id>Q6NT76</id>
    </interactant>
    <interactant intactId="EBI-723426">
        <id>Q13084</id>
        <label>MRPL28</label>
    </interactant>
    <organismsDiffer>false</organismsDiffer>
    <experiments>3</experiments>
</comment>
<comment type="interaction">
    <interactant intactId="EBI-2549423">
        <id>Q6NT76</id>
    </interactant>
    <interactant intactId="EBI-10177044">
        <id>E9PJI5</id>
        <label>NPIPA7</label>
    </interactant>
    <organismsDiffer>false</organismsDiffer>
    <experiments>3</experiments>
</comment>
<comment type="interaction">
    <interactant intactId="EBI-2549423">
        <id>Q6NT76</id>
    </interactant>
    <interactant intactId="EBI-296331">
        <id>Q02548</id>
        <label>PAX5</label>
    </interactant>
    <organismsDiffer>false</organismsDiffer>
    <experiments>3</experiments>
</comment>
<comment type="interaction">
    <interactant intactId="EBI-2549423">
        <id>Q6NT76</id>
    </interactant>
    <interactant intactId="EBI-747278">
        <id>P26367</id>
        <label>PAX6</label>
    </interactant>
    <organismsDiffer>false</organismsDiffer>
    <experiments>3</experiments>
</comment>
<comment type="interaction">
    <interactant intactId="EBI-2549423">
        <id>Q6NT76</id>
    </interactant>
    <interactant intactId="EBI-348567">
        <id>O75928-2</id>
        <label>PIAS2</label>
    </interactant>
    <organismsDiffer>false</organismsDiffer>
    <experiments>3</experiments>
</comment>
<comment type="interaction">
    <interactant intactId="EBI-2549423">
        <id>Q6NT76</id>
    </interactant>
    <interactant intactId="EBI-79165">
        <id>Q9NRD5</id>
        <label>PICK1</label>
    </interactant>
    <organismsDiffer>false</organismsDiffer>
    <experiments>3</experiments>
</comment>
<comment type="interaction">
    <interactant intactId="EBI-2549423">
        <id>Q6NT76</id>
    </interactant>
    <interactant intactId="EBI-947090">
        <id>P78356</id>
        <label>PIP4K2B</label>
    </interactant>
    <organismsDiffer>false</organismsDiffer>
    <experiments>5</experiments>
</comment>
<comment type="interaction">
    <interactant intactId="EBI-2549423">
        <id>Q6NT76</id>
    </interactant>
    <interactant intactId="EBI-10276663">
        <id>Q8WUT1</id>
        <label>POLDIP3</label>
    </interactant>
    <organismsDiffer>false</organismsDiffer>
    <experiments>3</experiments>
</comment>
<comment type="interaction">
    <interactant intactId="EBI-2549423">
        <id>Q6NT76</id>
    </interactant>
    <interactant intactId="EBI-10320765">
        <id>Q9UGP5-2</id>
        <label>POLL</label>
    </interactant>
    <organismsDiffer>false</organismsDiffer>
    <experiments>3</experiments>
</comment>
<comment type="interaction">
    <interactant intactId="EBI-2549423">
        <id>Q6NT76</id>
    </interactant>
    <interactant intactId="EBI-1181405">
        <id>Q13131</id>
        <label>PRKAA1</label>
    </interactant>
    <organismsDiffer>false</organismsDiffer>
    <experiments>3</experiments>
</comment>
<comment type="interaction">
    <interactant intactId="EBI-2549423">
        <id>Q6NT76</id>
    </interactant>
    <interactant intactId="EBI-1383852">
        <id>P54646</id>
        <label>PRKAA2</label>
    </interactant>
    <organismsDiffer>false</organismsDiffer>
    <experiments>3</experiments>
</comment>
<comment type="interaction">
    <interactant intactId="EBI-2549423">
        <id>Q6NT76</id>
    </interactant>
    <interactant intactId="EBI-2798416">
        <id>Q99633</id>
        <label>PRPF18</label>
    </interactant>
    <organismsDiffer>false</organismsDiffer>
    <experiments>3</experiments>
</comment>
<comment type="interaction">
    <interactant intactId="EBI-2549423">
        <id>Q6NT76</id>
    </interactant>
    <interactant intactId="EBI-1504830">
        <id>Q9P2K3-2</id>
        <label>RCOR3</label>
    </interactant>
    <organismsDiffer>false</organismsDiffer>
    <experiments>3</experiments>
</comment>
<comment type="interaction">
    <interactant intactId="EBI-2549423">
        <id>Q6NT76</id>
    </interactant>
    <interactant intactId="EBI-750345">
        <id>Q96HR9</id>
        <label>REEP6</label>
    </interactant>
    <organismsDiffer>false</organismsDiffer>
    <experiments>3</experiments>
</comment>
<comment type="interaction">
    <interactant intactId="EBI-2549423">
        <id>Q6NT76</id>
    </interactant>
    <interactant intactId="EBI-358122">
        <id>P32969</id>
        <label>RPL9P9</label>
    </interactant>
    <organismsDiffer>false</organismsDiffer>
    <experiments>6</experiments>
</comment>
<comment type="interaction">
    <interactant intactId="EBI-2549423">
        <id>Q6NT76</id>
    </interactant>
    <interactant intactId="EBI-353054">
        <id>P62851</id>
        <label>RPS25</label>
    </interactant>
    <organismsDiffer>false</organismsDiffer>
    <experiments>3</experiments>
</comment>
<comment type="interaction">
    <interactant intactId="EBI-2549423">
        <id>Q6NT76</id>
    </interactant>
    <interactant intactId="EBI-2340040">
        <id>Q9HAJ7</id>
        <label>SAP30L</label>
    </interactant>
    <organismsDiffer>false</organismsDiffer>
    <experiments>3</experiments>
</comment>
<comment type="interaction">
    <interactant intactId="EBI-2549423">
        <id>Q6NT76</id>
    </interactant>
    <interactant intactId="EBI-748391">
        <id>Q9BWG6</id>
        <label>SCNM1</label>
    </interactant>
    <organismsDiffer>false</organismsDiffer>
    <experiments>3</experiments>
</comment>
<comment type="interaction">
    <interactant intactId="EBI-2549423">
        <id>Q6NT76</id>
    </interactant>
    <interactant intactId="EBI-727004">
        <id>O00560</id>
        <label>SDCBP</label>
    </interactant>
    <organismsDiffer>false</organismsDiffer>
    <experiments>3</experiments>
</comment>
<comment type="interaction">
    <interactant intactId="EBI-2549423">
        <id>Q6NT76</id>
    </interactant>
    <interactant intactId="EBI-747035">
        <id>Q9H788</id>
        <label>SH2D4A</label>
    </interactant>
    <organismsDiffer>false</organismsDiffer>
    <experiments>6</experiments>
</comment>
<comment type="interaction">
    <interactant intactId="EBI-2549423">
        <id>Q6NT76</id>
    </interactant>
    <interactant intactId="EBI-1053651">
        <id>P08579</id>
        <label>SNRPB2</label>
    </interactant>
    <organismsDiffer>false</organismsDiffer>
    <experiments>3</experiments>
</comment>
<comment type="interaction">
    <interactant intactId="EBI-2549423">
        <id>Q6NT76</id>
    </interactant>
    <interactant intactId="EBI-632715">
        <id>Q13573</id>
        <label>SNW1</label>
    </interactant>
    <organismsDiffer>false</organismsDiffer>
    <experiments>3</experiments>
</comment>
<comment type="interaction">
    <interactant intactId="EBI-2549423">
        <id>Q6NT76</id>
    </interactant>
    <interactant intactId="EBI-10246152">
        <id>Q5T7P8-2</id>
        <label>SYT6</label>
    </interactant>
    <organismsDiffer>false</organismsDiffer>
    <experiments>3</experiments>
</comment>
<comment type="interaction">
    <interactant intactId="EBI-2549423">
        <id>Q6NT76</id>
    </interactant>
    <interactant intactId="EBI-10239991">
        <id>Q32MN6</id>
        <label>TBP</label>
    </interactant>
    <organismsDiffer>false</organismsDiffer>
    <experiments>3</experiments>
</comment>
<comment type="interaction">
    <interactant intactId="EBI-2549423">
        <id>Q6NT76</id>
    </interactant>
    <interactant intactId="EBI-710310">
        <id>Q15560</id>
        <label>TCEA2</label>
    </interactant>
    <organismsDiffer>false</organismsDiffer>
    <experiments>3</experiments>
</comment>
<comment type="interaction">
    <interactant intactId="EBI-2549423">
        <id>Q6NT76</id>
    </interactant>
    <interactant intactId="EBI-954696">
        <id>Q8N8B7</id>
        <label>TCEANC</label>
    </interactant>
    <organismsDiffer>false</organismsDiffer>
    <experiments>3</experiments>
</comment>
<comment type="interaction">
    <interactant intactId="EBI-2549423">
        <id>Q6NT76</id>
    </interactant>
    <interactant intactId="EBI-10241197">
        <id>Q3SY00</id>
        <label>TSGA10IP</label>
    </interactant>
    <organismsDiffer>false</organismsDiffer>
    <experiments>3</experiments>
</comment>
<comment type="interaction">
    <interactant intactId="EBI-2549423">
        <id>Q6NT76</id>
    </interactant>
    <interactant intactId="EBI-12261790">
        <id>A0A384ME17</id>
        <label>TUFM</label>
    </interactant>
    <organismsDiffer>false</organismsDiffer>
    <experiments>3</experiments>
</comment>
<comment type="interaction">
    <interactant intactId="EBI-2549423">
        <id>Q6NT76</id>
    </interactant>
    <interactant intactId="EBI-11097439">
        <id>P26368-2</id>
        <label>U2AF2</label>
    </interactant>
    <organismsDiffer>false</organismsDiffer>
    <experiments>3</experiments>
</comment>
<comment type="interaction">
    <interactant intactId="EBI-2549423">
        <id>Q6NT76</id>
    </interactant>
    <interactant intactId="EBI-5282516">
        <id>A0AVT1</id>
        <label>UBA6</label>
    </interactant>
    <organismsDiffer>false</organismsDiffer>
    <experiments>3</experiments>
</comment>
<comment type="interaction">
    <interactant intactId="EBI-2549423">
        <id>Q6NT76</id>
    </interactant>
    <interactant intactId="EBI-10180829">
        <id>Q7KZS0</id>
        <label>UBE2I</label>
    </interactant>
    <organismsDiffer>false</organismsDiffer>
    <experiments>3</experiments>
</comment>
<comment type="interaction">
    <interactant intactId="EBI-2549423">
        <id>Q6NT76</id>
    </interactant>
    <interactant intactId="EBI-720977">
        <id>Q9H832</id>
        <label>UBE2Z</label>
    </interactant>
    <organismsDiffer>false</organismsDiffer>
    <experiments>3</experiments>
</comment>
<comment type="interaction">
    <interactant intactId="EBI-2549423">
        <id>Q6NT76</id>
    </interactant>
    <interactant intactId="EBI-12227803">
        <id>Q5SQQ9-2</id>
        <label>VAX1</label>
    </interactant>
    <organismsDiffer>false</organismsDiffer>
    <experiments>3</experiments>
</comment>
<comment type="interaction">
    <interactant intactId="EBI-2549423">
        <id>Q6NT76</id>
    </interactant>
    <interactant intactId="EBI-399189">
        <id>Q15906</id>
        <label>VPS72</label>
    </interactant>
    <organismsDiffer>false</organismsDiffer>
    <experiments>3</experiments>
</comment>
<comment type="interaction">
    <interactant intactId="EBI-2549423">
        <id>Q6NT76</id>
    </interactant>
    <interactant intactId="EBI-11745701">
        <id>P19544-6</id>
        <label>WT1</label>
    </interactant>
    <organismsDiffer>false</organismsDiffer>
    <experiments>3</experiments>
</comment>
<comment type="interaction">
    <interactant intactId="EBI-2549423">
        <id>Q6NT76</id>
    </interactant>
    <interactant intactId="EBI-353208">
        <id>P12956</id>
        <label>XRCC6</label>
    </interactant>
    <organismsDiffer>false</organismsDiffer>
    <experiments>2</experiments>
</comment>
<comment type="interaction">
    <interactant intactId="EBI-2549423">
        <id>Q6NT76</id>
    </interactant>
    <interactant intactId="EBI-744471">
        <id>O43167</id>
        <label>ZBTB24</label>
    </interactant>
    <organismsDiffer>false</organismsDiffer>
    <experiments>3</experiments>
</comment>
<comment type="interaction">
    <interactant intactId="EBI-2549423">
        <id>Q6NT76</id>
    </interactant>
    <interactant intactId="EBI-3918996">
        <id>Q9HCK0</id>
        <label>ZBTB26</label>
    </interactant>
    <organismsDiffer>false</organismsDiffer>
    <experiments>3</experiments>
</comment>
<comment type="interaction">
    <interactant intactId="EBI-2549423">
        <id>Q6NT76</id>
    </interactant>
    <interactant intactId="EBI-8656416">
        <id>Q68DK2-5</id>
        <label>ZFYVE26</label>
    </interactant>
    <organismsDiffer>false</organismsDiffer>
    <experiments>3</experiments>
</comment>
<comment type="interaction">
    <interactant intactId="EBI-2549423">
        <id>Q6NT76</id>
    </interactant>
    <interactant intactId="EBI-2682299">
        <id>Q96NC0</id>
        <label>ZMAT2</label>
    </interactant>
    <organismsDiffer>false</organismsDiffer>
    <experiments>3</experiments>
</comment>
<comment type="interaction">
    <interactant intactId="EBI-2549423">
        <id>Q6NT76</id>
    </interactant>
    <interactant intactId="EBI-17634549">
        <id>Q9UJ78-2</id>
        <label>ZMYM5</label>
    </interactant>
    <organismsDiffer>false</organismsDiffer>
    <experiments>3</experiments>
</comment>
<comment type="interaction">
    <interactant intactId="EBI-2549423">
        <id>Q6NT76</id>
    </interactant>
    <interactant intactId="EBI-10177272">
        <id>P15622-3</id>
        <label>ZNF250</label>
    </interactant>
    <organismsDiffer>false</organismsDiffer>
    <experiments>3</experiments>
</comment>
<comment type="interaction">
    <interactant intactId="EBI-2549423">
        <id>Q6NT76</id>
    </interactant>
    <interactant intactId="EBI-714987">
        <id>Q9Y3M9</id>
        <label>ZNF337</label>
    </interactant>
    <organismsDiffer>false</organismsDiffer>
    <experiments>3</experiments>
</comment>
<comment type="interaction">
    <interactant intactId="EBI-2549423">
        <id>Q6NT76</id>
    </interactant>
    <interactant intactId="EBI-740727">
        <id>Q8TAU3</id>
        <label>ZNF417</label>
    </interactant>
    <organismsDiffer>false</organismsDiffer>
    <experiments>6</experiments>
</comment>
<comment type="interaction">
    <interactant intactId="EBI-2549423">
        <id>Q6NT76</id>
    </interactant>
    <interactant intactId="EBI-745520">
        <id>Q9P0T4</id>
        <label>ZNF581</label>
    </interactant>
    <organismsDiffer>false</organismsDiffer>
    <experiments>6</experiments>
</comment>
<comment type="interaction">
    <interactant intactId="EBI-2549423">
        <id>Q6NT76</id>
    </interactant>
    <interactant intactId="EBI-6427977">
        <id>Q96SQ5</id>
        <label>ZNF587</label>
    </interactant>
    <organismsDiffer>false</organismsDiffer>
    <experiments>3</experiments>
</comment>
<comment type="interaction">
    <interactant intactId="EBI-2549423">
        <id>Q6NT76</id>
    </interactant>
    <interactant intactId="EBI-16429014">
        <id>A0A0S2Z5X4</id>
        <label>ZNF688</label>
    </interactant>
    <organismsDiffer>false</organismsDiffer>
    <experiments>3</experiments>
</comment>
<comment type="interaction">
    <interactant intactId="EBI-10212206">
        <id>Q6NT76-2</id>
    </interactant>
    <interactant intactId="EBI-740459">
        <id>P51116</id>
        <label>FXR2</label>
    </interactant>
    <organismsDiffer>false</organismsDiffer>
    <experiments>3</experiments>
</comment>
<comment type="interaction">
    <interactant intactId="EBI-10212206">
        <id>Q6NT76-2</id>
    </interactant>
    <interactant intactId="EBI-399246">
        <id>Q9UBU8</id>
        <label>MORF4L1</label>
    </interactant>
    <organismsDiffer>false</organismsDiffer>
    <experiments>3</experiments>
</comment>
<comment type="interaction">
    <interactant intactId="EBI-10212206">
        <id>Q6NT76-2</id>
    </interactant>
    <interactant intactId="EBI-750345">
        <id>Q96HR9</id>
        <label>REEP6</label>
    </interactant>
    <organismsDiffer>false</organismsDiffer>
    <experiments>3</experiments>
</comment>
<comment type="interaction">
    <interactant intactId="EBI-10212206">
        <id>Q6NT76-2</id>
    </interactant>
    <interactant intactId="EBI-1104535">
        <id>Q86XK3</id>
        <label>SFR1</label>
    </interactant>
    <organismsDiffer>false</organismsDiffer>
    <experiments>3</experiments>
</comment>
<comment type="subcellular location">
    <subcellularLocation>
        <location evidence="6 7">Nucleus</location>
    </subcellularLocation>
    <subcellularLocation>
        <location evidence="6 7">Cytoplasm</location>
    </subcellularLocation>
    <subcellularLocation>
        <location evidence="9 10">Chromosome</location>
        <location evidence="9 10">Telomere</location>
    </subcellularLocation>
    <subcellularLocation>
        <location evidence="9">Nucleus</location>
        <location evidence="9">Cajal body</location>
    </subcellularLocation>
    <subcellularLocation>
        <location evidence="10">Nucleus</location>
        <location evidence="10">PML body</location>
    </subcellularLocation>
    <text evidence="6 7 9 10">Predominantly detected in cytoplasm (PubMed:16825764, PubMed:19728927). Localizes in a dynamic manner to actively processed telomeres (PubMed:23685356). Localizes to the periphery of Cajal bodies (PubMed:23685356). Associates with PML nuclear bodies in telomerase-negative cells (PubMed:23813958).</text>
</comment>
<comment type="subcellular location">
    <molecule>Isoform 5</molecule>
    <subcellularLocation>
        <location evidence="8">Nucleus</location>
    </subcellularLocation>
    <subcellularLocation>
        <location evidence="8">Cytoplasm</location>
    </subcellularLocation>
</comment>
<comment type="alternative products">
    <event type="alternative splicing"/>
    <isoform>
        <id>Q6NT76-1</id>
        <name>1</name>
        <name>HMBOX1A</name>
        <sequence type="displayed"/>
    </isoform>
    <isoform>
        <id>Q6NT76-2</id>
        <name>2</name>
        <sequence type="described" ref="VSP_018112 VSP_018113"/>
    </isoform>
    <isoform>
        <id>Q6NT76-3</id>
        <name>3</name>
        <sequence type="described" ref="VSP_018111"/>
    </isoform>
    <isoform>
        <id>Q6NT76-4</id>
        <name>4</name>
        <name>HMBOX1b</name>
        <sequence type="described" ref="VSP_038983 VSP_038984"/>
    </isoform>
    <isoform>
        <id>Q6NT76-5</id>
        <name>5</name>
        <sequence type="described" ref="VSP_018112 VSP_038985"/>
    </isoform>
</comment>
<comment type="tissue specificity">
    <text evidence="6 7 8">Ubiquitous. Detected in pancreas, brain, spleen, placenta, prostate, thymus, liver, heart, bone marrow, skeletal muscle, stomach, uterus, testis, kidney, ovary, colon, lung, cardiac muscle and thyroid gland.</text>
</comment>
<comment type="domain">
    <text evidence="9 10">The homeobox domain is required for binding to 5'-TTAGGG-3' repeats in telomeres, and for telomere localization.</text>
</comment>
<comment type="caution">
    <text evidence="6 8 18">Reported to have transcriptional repression activity in vitro (PubMed:16825764, PubMed:19757162). However, it is unclear whether this protein has any function in transcription in vivo.</text>
</comment>
<comment type="sequence caution" evidence="18">
    <conflict type="erroneous initiation">
        <sequence resource="EMBL-CDS" id="BAB15099"/>
    </conflict>
    <text>Truncated N-terminus.</text>
</comment>
<feature type="chain" id="PRO_0000233287" description="Homeobox-containing protein 1">
    <location>
        <begin position="1"/>
        <end position="420"/>
    </location>
</feature>
<feature type="domain" description="HNF-p1" evidence="4">
    <location>
        <begin position="18"/>
        <end position="49"/>
    </location>
</feature>
<feature type="domain" description="POU-specific atypical" evidence="3">
    <location>
        <begin position="145"/>
        <end position="241"/>
    </location>
</feature>
<feature type="DNA-binding region" description="Homeobox" evidence="2 9">
    <location>
        <begin position="267"/>
        <end position="341"/>
    </location>
</feature>
<feature type="region of interest" description="Disordered" evidence="5">
    <location>
        <begin position="56"/>
        <end position="139"/>
    </location>
</feature>
<feature type="region of interest" description="Disordered" evidence="5">
    <location>
        <begin position="353"/>
        <end position="385"/>
    </location>
</feature>
<feature type="compositionally biased region" description="Low complexity" evidence="5">
    <location>
        <begin position="64"/>
        <end position="73"/>
    </location>
</feature>
<feature type="compositionally biased region" description="Low complexity" evidence="5">
    <location>
        <begin position="81"/>
        <end position="93"/>
    </location>
</feature>
<feature type="compositionally biased region" description="Polar residues" evidence="5">
    <location>
        <begin position="94"/>
        <end position="132"/>
    </location>
</feature>
<feature type="compositionally biased region" description="Acidic residues" evidence="5">
    <location>
        <begin position="365"/>
        <end position="377"/>
    </location>
</feature>
<feature type="site" description="Critical for recognition and binding of 5'-TTAGGG-3' motifs in telomeric DNA" evidence="9">
    <location>
        <position position="335"/>
    </location>
</feature>
<feature type="modified residue" description="Phosphoserine" evidence="19">
    <location>
        <position position="148"/>
    </location>
</feature>
<feature type="modified residue" description="Phosphoserine" evidence="19">
    <location>
        <position position="170"/>
    </location>
</feature>
<feature type="cross-link" description="Glycyl lysine isopeptide (Lys-Gly) (interchain with G-Cter in SUMO2)" evidence="24">
    <location>
        <position position="60"/>
    </location>
</feature>
<feature type="cross-link" description="Glycyl lysine isopeptide (Lys-Gly) (interchain with G-Cter in SUMO2)" evidence="24">
    <location>
        <position position="131"/>
    </location>
</feature>
<feature type="cross-link" description="Glycyl lysine isopeptide (Lys-Gly) (interchain with G-Cter in SUMO2)" evidence="22 24">
    <location>
        <position position="161"/>
    </location>
</feature>
<feature type="cross-link" description="Glycyl lysine isopeptide (Lys-Gly) (interchain with G-Cter in SUMO2)" evidence="22 24">
    <location>
        <position position="174"/>
    </location>
</feature>
<feature type="cross-link" description="Glycyl lysine isopeptide (Lys-Gly) (interchain with G-Cter in SUMO2)" evidence="22 24">
    <location>
        <position position="217"/>
    </location>
</feature>
<feature type="cross-link" description="Glycyl lysine isopeptide (Lys-Gly) (interchain with G-Cter in SUMO2)" evidence="24">
    <location>
        <position position="310"/>
    </location>
</feature>
<feature type="cross-link" description="Glycyl lysine isopeptide (Lys-Gly) (interchain with G-Cter in SUMO1); alternate" evidence="20">
    <location>
        <position position="413"/>
    </location>
</feature>
<feature type="cross-link" description="Glycyl lysine isopeptide (Lys-Gly) (interchain with G-Cter in SUMO2); alternate" evidence="20 21 22 23 24">
    <location>
        <position position="413"/>
    </location>
</feature>
<feature type="splice variant" id="VSP_038983" description="In isoform 4." evidence="14">
    <original>SYFNENQYPDEAKREEIANAC</original>
    <variation>RNTWSPERRMEENKWKLLSAG</variation>
    <location>
        <begin position="284"/>
        <end position="304"/>
    </location>
</feature>
<feature type="splice variant" id="VSP_038984" description="In isoform 4." evidence="14">
    <location>
        <begin position="305"/>
        <end position="420"/>
    </location>
</feature>
<feature type="splice variant" id="VSP_018111" description="In isoform 3." evidence="17">
    <location>
        <begin position="344"/>
        <end position="345"/>
    </location>
</feature>
<feature type="splice variant" id="VSP_018112" description="In isoform 2 and isoform 5." evidence="11 12">
    <location>
        <position position="344"/>
    </location>
</feature>
<feature type="splice variant" id="VSP_038985" description="In isoform 5." evidence="11">
    <original>Q</original>
    <variation>QDTWQVRNGEEEEGRSSEGGREAEK</variation>
    <location>
        <position position="375"/>
    </location>
</feature>
<feature type="splice variant" id="VSP_018113" description="In isoform 2." evidence="12">
    <original>DSTSHSDHQDPISLAVEMAAVNHTILALARQGANEIKTEALDDD</original>
    <variation>TWQVRNGEEEEGRSSEGGREAEKVEEERRI</variation>
    <location>
        <begin position="377"/>
        <end position="420"/>
    </location>
</feature>
<feature type="mutagenesis site" description="Abolishes binding to telomeric 5'-TTAGGG-3' motif." evidence="9">
    <original>R</original>
    <variation>A</variation>
    <location>
        <position position="271"/>
    </location>
</feature>
<feature type="mutagenesis site" description="Abolishes binding to telomeric 5'-TTAGGG-3' motif." evidence="9">
    <original>K</original>
    <variation>E</variation>
    <location>
        <position position="325"/>
    </location>
</feature>
<feature type="mutagenesis site" description="Impairs binding to telomeric 5'-TTAGGG-3' motif." evidence="9">
    <original>Y</original>
    <variation>A</variation>
    <location>
        <position position="327"/>
    </location>
</feature>
<feature type="mutagenesis site" description="Impairs binding to telomeric 5'-TTAGGG-3' motif." evidence="9">
    <original>R</original>
    <variation>A</variation>
    <location>
        <position position="334"/>
    </location>
</feature>
<feature type="mutagenesis site" description="Abolishes binding to telomeric 5'-TTAGGG-3' motif. Confers binding to the non-telomeric 5'-GTGAGT-3' motif." evidence="9">
    <original>K</original>
    <variation>A</variation>
    <location>
        <position position="335"/>
    </location>
</feature>
<feature type="mutagenesis site" description="Impairs binding to telomeric 5'-TTAGGG-3' motif." evidence="9">
    <original>K</original>
    <variation>A</variation>
    <location>
        <position position="338"/>
    </location>
</feature>
<feature type="mutagenesis site" description="Abolishes binding to telomeric 5'-TTAGGG-3' motif." evidence="9">
    <original>R</original>
    <variation>A</variation>
    <location>
        <position position="339"/>
    </location>
</feature>
<feature type="sequence conflict" description="In Ref. 6; AAZ81565." evidence="18" ref="6">
    <original>R</original>
    <variation>G</variation>
    <location>
        <position position="167"/>
    </location>
</feature>
<feature type="helix" evidence="25">
    <location>
        <begin position="276"/>
        <end position="286"/>
    </location>
</feature>
<feature type="helix" evidence="25">
    <location>
        <begin position="294"/>
        <end position="308"/>
    </location>
</feature>
<feature type="turn" evidence="25">
    <location>
        <begin position="317"/>
        <end position="319"/>
    </location>
</feature>
<feature type="helix" evidence="25">
    <location>
        <begin position="323"/>
        <end position="343"/>
    </location>
</feature>
<evidence type="ECO:0000250" key="1">
    <source>
        <dbReference type="UniProtKB" id="Q8BJA3"/>
    </source>
</evidence>
<evidence type="ECO:0000255" key="2">
    <source>
        <dbReference type="PROSITE-ProRule" id="PRU00108"/>
    </source>
</evidence>
<evidence type="ECO:0000255" key="3">
    <source>
        <dbReference type="PROSITE-ProRule" id="PRU01285"/>
    </source>
</evidence>
<evidence type="ECO:0000255" key="4">
    <source>
        <dbReference type="PROSITE-ProRule" id="PRU01286"/>
    </source>
</evidence>
<evidence type="ECO:0000256" key="5">
    <source>
        <dbReference type="SAM" id="MobiDB-lite"/>
    </source>
</evidence>
<evidence type="ECO:0000269" key="6">
    <source>
    </source>
</evidence>
<evidence type="ECO:0000269" key="7">
    <source>
    </source>
</evidence>
<evidence type="ECO:0000269" key="8">
    <source>
    </source>
</evidence>
<evidence type="ECO:0000269" key="9">
    <source>
    </source>
</evidence>
<evidence type="ECO:0000269" key="10">
    <source>
    </source>
</evidence>
<evidence type="ECO:0000303" key="11">
    <source>
    </source>
</evidence>
<evidence type="ECO:0000303" key="12">
    <source>
    </source>
</evidence>
<evidence type="ECO:0000303" key="13">
    <source>
    </source>
</evidence>
<evidence type="ECO:0000303" key="14">
    <source>
    </source>
</evidence>
<evidence type="ECO:0000303" key="15">
    <source>
    </source>
</evidence>
<evidence type="ECO:0000303" key="16">
    <source>
    </source>
</evidence>
<evidence type="ECO:0000303" key="17">
    <source ref="6"/>
</evidence>
<evidence type="ECO:0000305" key="18"/>
<evidence type="ECO:0007744" key="19">
    <source>
    </source>
</evidence>
<evidence type="ECO:0007744" key="20">
    <source>
    </source>
</evidence>
<evidence type="ECO:0007744" key="21">
    <source>
    </source>
</evidence>
<evidence type="ECO:0007744" key="22">
    <source>
    </source>
</evidence>
<evidence type="ECO:0007744" key="23">
    <source>
    </source>
</evidence>
<evidence type="ECO:0007744" key="24">
    <source>
    </source>
</evidence>
<evidence type="ECO:0007829" key="25">
    <source>
        <dbReference type="PDB" id="4J19"/>
    </source>
</evidence>
<proteinExistence type="evidence at protein level"/>
<organism>
    <name type="scientific">Homo sapiens</name>
    <name type="common">Human</name>
    <dbReference type="NCBI Taxonomy" id="9606"/>
    <lineage>
        <taxon>Eukaryota</taxon>
        <taxon>Metazoa</taxon>
        <taxon>Chordata</taxon>
        <taxon>Craniata</taxon>
        <taxon>Vertebrata</taxon>
        <taxon>Euteleostomi</taxon>
        <taxon>Mammalia</taxon>
        <taxon>Eutheria</taxon>
        <taxon>Euarchontoglires</taxon>
        <taxon>Primates</taxon>
        <taxon>Haplorrhini</taxon>
        <taxon>Catarrhini</taxon>
        <taxon>Hominidae</taxon>
        <taxon>Homo</taxon>
    </lineage>
</organism>